<sequence>MNLKPLNDRVLVKRLESEEKTAGGLYIPDTAKEKPSRGEVVAVGPGKHTDDGKLIPMAVKAGDTVLFNKYAGTEVKLDGVEHLVMREDDILAVITGETGRK</sequence>
<proteinExistence type="inferred from homology"/>
<feature type="chain" id="PRO_1000025288" description="Co-chaperonin GroES">
    <location>
        <begin position="1"/>
        <end position="101"/>
    </location>
</feature>
<gene>
    <name evidence="1" type="primary">groES</name>
    <name evidence="1" type="synonym">groS</name>
    <name type="ordered locus">LI0624</name>
</gene>
<accession>Q1MQP9</accession>
<dbReference type="EMBL" id="AM180252">
    <property type="protein sequence ID" value="CAJ54678.1"/>
    <property type="molecule type" value="Genomic_DNA"/>
</dbReference>
<dbReference type="RefSeq" id="WP_011526707.1">
    <property type="nucleotide sequence ID" value="NC_008011.1"/>
</dbReference>
<dbReference type="SMR" id="Q1MQP9"/>
<dbReference type="STRING" id="363253.LI0624"/>
<dbReference type="KEGG" id="lip:LI0624"/>
<dbReference type="eggNOG" id="COG0234">
    <property type="taxonomic scope" value="Bacteria"/>
</dbReference>
<dbReference type="HOGENOM" id="CLU_132825_1_0_7"/>
<dbReference type="OrthoDB" id="9806791at2"/>
<dbReference type="Proteomes" id="UP000002430">
    <property type="component" value="Chromosome"/>
</dbReference>
<dbReference type="GO" id="GO:0005737">
    <property type="term" value="C:cytoplasm"/>
    <property type="evidence" value="ECO:0007669"/>
    <property type="project" value="UniProtKB-SubCell"/>
</dbReference>
<dbReference type="GO" id="GO:0005524">
    <property type="term" value="F:ATP binding"/>
    <property type="evidence" value="ECO:0007669"/>
    <property type="project" value="InterPro"/>
</dbReference>
<dbReference type="GO" id="GO:0046872">
    <property type="term" value="F:metal ion binding"/>
    <property type="evidence" value="ECO:0007669"/>
    <property type="project" value="TreeGrafter"/>
</dbReference>
<dbReference type="GO" id="GO:0044183">
    <property type="term" value="F:protein folding chaperone"/>
    <property type="evidence" value="ECO:0007669"/>
    <property type="project" value="InterPro"/>
</dbReference>
<dbReference type="GO" id="GO:0051087">
    <property type="term" value="F:protein-folding chaperone binding"/>
    <property type="evidence" value="ECO:0007669"/>
    <property type="project" value="TreeGrafter"/>
</dbReference>
<dbReference type="GO" id="GO:0051082">
    <property type="term" value="F:unfolded protein binding"/>
    <property type="evidence" value="ECO:0007669"/>
    <property type="project" value="TreeGrafter"/>
</dbReference>
<dbReference type="GO" id="GO:0051085">
    <property type="term" value="P:chaperone cofactor-dependent protein refolding"/>
    <property type="evidence" value="ECO:0007669"/>
    <property type="project" value="TreeGrafter"/>
</dbReference>
<dbReference type="CDD" id="cd00320">
    <property type="entry name" value="cpn10"/>
    <property type="match status" value="1"/>
</dbReference>
<dbReference type="FunFam" id="2.30.33.40:FF:000001">
    <property type="entry name" value="10 kDa chaperonin"/>
    <property type="match status" value="1"/>
</dbReference>
<dbReference type="Gene3D" id="2.30.33.40">
    <property type="entry name" value="GroES chaperonin"/>
    <property type="match status" value="1"/>
</dbReference>
<dbReference type="HAMAP" id="MF_00580">
    <property type="entry name" value="CH10"/>
    <property type="match status" value="1"/>
</dbReference>
<dbReference type="InterPro" id="IPR020818">
    <property type="entry name" value="Chaperonin_GroES"/>
</dbReference>
<dbReference type="InterPro" id="IPR037124">
    <property type="entry name" value="Chaperonin_GroES_sf"/>
</dbReference>
<dbReference type="InterPro" id="IPR018369">
    <property type="entry name" value="Chaprnonin_Cpn10_CS"/>
</dbReference>
<dbReference type="InterPro" id="IPR011032">
    <property type="entry name" value="GroES-like_sf"/>
</dbReference>
<dbReference type="NCBIfam" id="NF001527">
    <property type="entry name" value="PRK00364.1-2"/>
    <property type="match status" value="1"/>
</dbReference>
<dbReference type="NCBIfam" id="NF001529">
    <property type="entry name" value="PRK00364.1-5"/>
    <property type="match status" value="1"/>
</dbReference>
<dbReference type="NCBIfam" id="NF001530">
    <property type="entry name" value="PRK00364.1-6"/>
    <property type="match status" value="1"/>
</dbReference>
<dbReference type="NCBIfam" id="NF001531">
    <property type="entry name" value="PRK00364.2-2"/>
    <property type="match status" value="1"/>
</dbReference>
<dbReference type="NCBIfam" id="NF001533">
    <property type="entry name" value="PRK00364.2-4"/>
    <property type="match status" value="1"/>
</dbReference>
<dbReference type="NCBIfam" id="NF001534">
    <property type="entry name" value="PRK00364.2-5"/>
    <property type="match status" value="1"/>
</dbReference>
<dbReference type="PANTHER" id="PTHR10772">
    <property type="entry name" value="10 KDA HEAT SHOCK PROTEIN"/>
    <property type="match status" value="1"/>
</dbReference>
<dbReference type="PANTHER" id="PTHR10772:SF58">
    <property type="entry name" value="CO-CHAPERONIN GROES"/>
    <property type="match status" value="1"/>
</dbReference>
<dbReference type="Pfam" id="PF00166">
    <property type="entry name" value="Cpn10"/>
    <property type="match status" value="1"/>
</dbReference>
<dbReference type="PRINTS" id="PR00297">
    <property type="entry name" value="CHAPERONIN10"/>
</dbReference>
<dbReference type="SMART" id="SM00883">
    <property type="entry name" value="Cpn10"/>
    <property type="match status" value="1"/>
</dbReference>
<dbReference type="SUPFAM" id="SSF50129">
    <property type="entry name" value="GroES-like"/>
    <property type="match status" value="1"/>
</dbReference>
<dbReference type="PROSITE" id="PS00681">
    <property type="entry name" value="CHAPERONINS_CPN10"/>
    <property type="match status" value="1"/>
</dbReference>
<reference key="1">
    <citation type="submission" date="2005-11" db="EMBL/GenBank/DDBJ databases">
        <title>The complete genome sequence of Lawsonia intracellularis: the causative agent of proliferative enteropathy.</title>
        <authorList>
            <person name="Kaur K."/>
            <person name="Zhang Q."/>
            <person name="Beckler D."/>
            <person name="Munir S."/>
            <person name="Li L."/>
            <person name="Kinsley K."/>
            <person name="Herron L."/>
            <person name="Peterson A."/>
            <person name="May B."/>
            <person name="Singh S."/>
            <person name="Gebhart C."/>
            <person name="Kapur V."/>
        </authorList>
    </citation>
    <scope>NUCLEOTIDE SEQUENCE [LARGE SCALE GENOMIC DNA]</scope>
    <source>
        <strain>PHE/MN1-00</strain>
    </source>
</reference>
<comment type="function">
    <text evidence="1">Together with the chaperonin GroEL, plays an essential role in assisting protein folding. The GroEL-GroES system forms a nano-cage that allows encapsulation of the non-native substrate proteins and provides a physical environment optimized to promote and accelerate protein folding. GroES binds to the apical surface of the GroEL ring, thereby capping the opening of the GroEL channel.</text>
</comment>
<comment type="subunit">
    <text evidence="1">Heptamer of 7 subunits arranged in a ring. Interacts with the chaperonin GroEL.</text>
</comment>
<comment type="subcellular location">
    <subcellularLocation>
        <location evidence="1">Cytoplasm</location>
    </subcellularLocation>
</comment>
<comment type="similarity">
    <text evidence="1">Belongs to the GroES chaperonin family.</text>
</comment>
<name>CH10_LAWIP</name>
<organism>
    <name type="scientific">Lawsonia intracellularis (strain PHE/MN1-00)</name>
    <dbReference type="NCBI Taxonomy" id="363253"/>
    <lineage>
        <taxon>Bacteria</taxon>
        <taxon>Pseudomonadati</taxon>
        <taxon>Thermodesulfobacteriota</taxon>
        <taxon>Desulfovibrionia</taxon>
        <taxon>Desulfovibrionales</taxon>
        <taxon>Desulfovibrionaceae</taxon>
        <taxon>Lawsonia</taxon>
    </lineage>
</organism>
<evidence type="ECO:0000255" key="1">
    <source>
        <dbReference type="HAMAP-Rule" id="MF_00580"/>
    </source>
</evidence>
<keyword id="KW-0143">Chaperone</keyword>
<keyword id="KW-0963">Cytoplasm</keyword>
<keyword id="KW-1185">Reference proteome</keyword>
<protein>
    <recommendedName>
        <fullName evidence="1">Co-chaperonin GroES</fullName>
    </recommendedName>
    <alternativeName>
        <fullName evidence="1">10 kDa chaperonin</fullName>
    </alternativeName>
    <alternativeName>
        <fullName evidence="1">Chaperonin-10</fullName>
        <shortName evidence="1">Cpn10</shortName>
    </alternativeName>
</protein>